<evidence type="ECO:0000256" key="1">
    <source>
        <dbReference type="SAM" id="MobiDB-lite"/>
    </source>
</evidence>
<evidence type="ECO:0000269" key="2">
    <source>
    </source>
</evidence>
<organism>
    <name type="scientific">Saccharomyces cerevisiae (strain ATCC 204508 / S288c)</name>
    <name type="common">Baker's yeast</name>
    <dbReference type="NCBI Taxonomy" id="559292"/>
    <lineage>
        <taxon>Eukaryota</taxon>
        <taxon>Fungi</taxon>
        <taxon>Dikarya</taxon>
        <taxon>Ascomycota</taxon>
        <taxon>Saccharomycotina</taxon>
        <taxon>Saccharomycetes</taxon>
        <taxon>Saccharomycetales</taxon>
        <taxon>Saccharomycetaceae</taxon>
        <taxon>Saccharomyces</taxon>
    </lineage>
</organism>
<gene>
    <name type="ordered locus">YKL063C</name>
    <name type="ORF">YKL327</name>
</gene>
<proteinExistence type="evidence at protein level"/>
<name>YKG3_YEAST</name>
<feature type="chain" id="PRO_0000203175" description="Uncharacterized protein YKL063C">
    <location>
        <begin position="1"/>
        <end position="167"/>
    </location>
</feature>
<feature type="region of interest" description="Disordered" evidence="1">
    <location>
        <begin position="1"/>
        <end position="26"/>
    </location>
</feature>
<feature type="region of interest" description="Disordered" evidence="1">
    <location>
        <begin position="67"/>
        <end position="167"/>
    </location>
</feature>
<feature type="compositionally biased region" description="Basic and acidic residues" evidence="1">
    <location>
        <begin position="1"/>
        <end position="13"/>
    </location>
</feature>
<feature type="compositionally biased region" description="Low complexity" evidence="1">
    <location>
        <begin position="71"/>
        <end position="80"/>
    </location>
</feature>
<feature type="compositionally biased region" description="Basic and acidic residues" evidence="1">
    <location>
        <begin position="102"/>
        <end position="156"/>
    </location>
</feature>
<protein>
    <recommendedName>
        <fullName>Uncharacterized protein YKL063C</fullName>
    </recommendedName>
</protein>
<dbReference type="EMBL" id="X75781">
    <property type="protein sequence ID" value="CAA53411.1"/>
    <property type="molecule type" value="Genomic_DNA"/>
</dbReference>
<dbReference type="EMBL" id="Z28063">
    <property type="protein sequence ID" value="CAA81900.1"/>
    <property type="molecule type" value="Genomic_DNA"/>
</dbReference>
<dbReference type="EMBL" id="AY558264">
    <property type="protein sequence ID" value="AAS56590.1"/>
    <property type="molecule type" value="Genomic_DNA"/>
</dbReference>
<dbReference type="EMBL" id="BK006944">
    <property type="protein sequence ID" value="DAA09094.1"/>
    <property type="molecule type" value="Genomic_DNA"/>
</dbReference>
<dbReference type="PIR" id="S37885">
    <property type="entry name" value="S37885"/>
</dbReference>
<dbReference type="RefSeq" id="NP_012860.1">
    <property type="nucleotide sequence ID" value="NM_001179629.1"/>
</dbReference>
<dbReference type="SMR" id="P35725"/>
<dbReference type="BioGRID" id="34070">
    <property type="interactions" value="81"/>
</dbReference>
<dbReference type="DIP" id="DIP-4867N"/>
<dbReference type="FunCoup" id="P35725">
    <property type="interactions" value="45"/>
</dbReference>
<dbReference type="IntAct" id="P35725">
    <property type="interactions" value="22"/>
</dbReference>
<dbReference type="STRING" id="4932.YKL063C"/>
<dbReference type="PaxDb" id="4932-YKL063C"/>
<dbReference type="PeptideAtlas" id="P35725"/>
<dbReference type="EnsemblFungi" id="YKL063C_mRNA">
    <property type="protein sequence ID" value="YKL063C"/>
    <property type="gene ID" value="YKL063C"/>
</dbReference>
<dbReference type="GeneID" id="853802"/>
<dbReference type="KEGG" id="sce:YKL063C"/>
<dbReference type="AGR" id="SGD:S000001546"/>
<dbReference type="SGD" id="S000001546">
    <property type="gene designation" value="YKL063C"/>
</dbReference>
<dbReference type="VEuPathDB" id="FungiDB:YKL063C"/>
<dbReference type="eggNOG" id="ENOG502S65V">
    <property type="taxonomic scope" value="Eukaryota"/>
</dbReference>
<dbReference type="HOGENOM" id="CLU_106810_0_0_1"/>
<dbReference type="InParanoid" id="P35725"/>
<dbReference type="OMA" id="WLTTPMK"/>
<dbReference type="OrthoDB" id="4069445at2759"/>
<dbReference type="BioCyc" id="YEAST:G3O-31861-MONOMER"/>
<dbReference type="BioGRID-ORCS" id="853802">
    <property type="hits" value="1 hit in 10 CRISPR screens"/>
</dbReference>
<dbReference type="PRO" id="PR:P35725"/>
<dbReference type="Proteomes" id="UP000002311">
    <property type="component" value="Chromosome XI"/>
</dbReference>
<dbReference type="RNAct" id="P35725">
    <property type="molecule type" value="protein"/>
</dbReference>
<dbReference type="GO" id="GO:0005794">
    <property type="term" value="C:Golgi apparatus"/>
    <property type="evidence" value="ECO:0007005"/>
    <property type="project" value="SGD"/>
</dbReference>
<reference key="1">
    <citation type="journal article" date="1994" name="Yeast">
        <title>Sequence of a 28.6 kb region of yeast chromosome XI includes the FBA1 and TOA2 genes, an open reading frame (ORF) similar to a translationally controlled tumour protein, one ORF containing motifs also found in plant storage proteins and 13 ORFs with weak or no homology to known proteins.</title>
        <authorList>
            <person name="Rasmussen S.W."/>
        </authorList>
    </citation>
    <scope>NUCLEOTIDE SEQUENCE [GENOMIC DNA]</scope>
    <source>
        <strain>ATCC 204508 / S288c</strain>
    </source>
</reference>
<reference key="2">
    <citation type="journal article" date="1994" name="Nature">
        <title>Complete DNA sequence of yeast chromosome XI.</title>
        <authorList>
            <person name="Dujon B."/>
            <person name="Alexandraki D."/>
            <person name="Andre B."/>
            <person name="Ansorge W."/>
            <person name="Baladron V."/>
            <person name="Ballesta J.P.G."/>
            <person name="Banrevi A."/>
            <person name="Bolle P.-A."/>
            <person name="Bolotin-Fukuhara M."/>
            <person name="Bossier P."/>
            <person name="Bou G."/>
            <person name="Boyer J."/>
            <person name="Buitrago M.J."/>
            <person name="Cheret G."/>
            <person name="Colleaux L."/>
            <person name="Daignan-Fornier B."/>
            <person name="del Rey F."/>
            <person name="Dion C."/>
            <person name="Domdey H."/>
            <person name="Duesterhoeft A."/>
            <person name="Duesterhus S."/>
            <person name="Entian K.-D."/>
            <person name="Erfle H."/>
            <person name="Esteban P.F."/>
            <person name="Feldmann H."/>
            <person name="Fernandes L."/>
            <person name="Fobo G.M."/>
            <person name="Fritz C."/>
            <person name="Fukuhara H."/>
            <person name="Gabel C."/>
            <person name="Gaillon L."/>
            <person name="Garcia-Cantalejo J.M."/>
            <person name="Garcia-Ramirez J.J."/>
            <person name="Gent M.E."/>
            <person name="Ghazvini M."/>
            <person name="Goffeau A."/>
            <person name="Gonzalez A."/>
            <person name="Grothues D."/>
            <person name="Guerreiro P."/>
            <person name="Hegemann J.H."/>
            <person name="Hewitt N."/>
            <person name="Hilger F."/>
            <person name="Hollenberg C.P."/>
            <person name="Horaitis O."/>
            <person name="Indge K.J."/>
            <person name="Jacquier A."/>
            <person name="James C.M."/>
            <person name="Jauniaux J.-C."/>
            <person name="Jimenez A."/>
            <person name="Keuchel H."/>
            <person name="Kirchrath L."/>
            <person name="Kleine K."/>
            <person name="Koetter P."/>
            <person name="Legrain P."/>
            <person name="Liebl S."/>
            <person name="Louis E.J."/>
            <person name="Maia e Silva A."/>
            <person name="Marck C."/>
            <person name="Monnier A.-L."/>
            <person name="Moestl D."/>
            <person name="Mueller S."/>
            <person name="Obermaier B."/>
            <person name="Oliver S.G."/>
            <person name="Pallier C."/>
            <person name="Pascolo S."/>
            <person name="Pfeiffer F."/>
            <person name="Philippsen P."/>
            <person name="Planta R.J."/>
            <person name="Pohl F.M."/>
            <person name="Pohl T.M."/>
            <person name="Poehlmann R."/>
            <person name="Portetelle D."/>
            <person name="Purnelle B."/>
            <person name="Puzos V."/>
            <person name="Ramezani Rad M."/>
            <person name="Rasmussen S.W."/>
            <person name="Remacha M.A."/>
            <person name="Revuelta J.L."/>
            <person name="Richard G.-F."/>
            <person name="Rieger M."/>
            <person name="Rodrigues-Pousada C."/>
            <person name="Rose M."/>
            <person name="Rupp T."/>
            <person name="Santos M.A."/>
            <person name="Schwager C."/>
            <person name="Sensen C."/>
            <person name="Skala J."/>
            <person name="Soares H."/>
            <person name="Sor F."/>
            <person name="Stegemann J."/>
            <person name="Tettelin H."/>
            <person name="Thierry A."/>
            <person name="Tzermia M."/>
            <person name="Urrestarazu L.A."/>
            <person name="van Dyck L."/>
            <person name="van Vliet-Reedijk J.C."/>
            <person name="Valens M."/>
            <person name="Vandenbol M."/>
            <person name="Vilela C."/>
            <person name="Vissers S."/>
            <person name="von Wettstein D."/>
            <person name="Voss H."/>
            <person name="Wiemann S."/>
            <person name="Xu G."/>
            <person name="Zimmermann J."/>
            <person name="Haasemann M."/>
            <person name="Becker I."/>
            <person name="Mewes H.-W."/>
        </authorList>
    </citation>
    <scope>NUCLEOTIDE SEQUENCE [LARGE SCALE GENOMIC DNA]</scope>
    <source>
        <strain>ATCC 204508 / S288c</strain>
    </source>
</reference>
<reference key="3">
    <citation type="journal article" date="2014" name="G3 (Bethesda)">
        <title>The reference genome sequence of Saccharomyces cerevisiae: Then and now.</title>
        <authorList>
            <person name="Engel S.R."/>
            <person name="Dietrich F.S."/>
            <person name="Fisk D.G."/>
            <person name="Binkley G."/>
            <person name="Balakrishnan R."/>
            <person name="Costanzo M.C."/>
            <person name="Dwight S.S."/>
            <person name="Hitz B.C."/>
            <person name="Karra K."/>
            <person name="Nash R.S."/>
            <person name="Weng S."/>
            <person name="Wong E.D."/>
            <person name="Lloyd P."/>
            <person name="Skrzypek M.S."/>
            <person name="Miyasato S.R."/>
            <person name="Simison M."/>
            <person name="Cherry J.M."/>
        </authorList>
    </citation>
    <scope>GENOME REANNOTATION</scope>
    <source>
        <strain>ATCC 204508 / S288c</strain>
    </source>
</reference>
<reference key="4">
    <citation type="journal article" date="2007" name="Genome Res.">
        <title>Approaching a complete repository of sequence-verified protein-encoding clones for Saccharomyces cerevisiae.</title>
        <authorList>
            <person name="Hu Y."/>
            <person name="Rolfs A."/>
            <person name="Bhullar B."/>
            <person name="Murthy T.V.S."/>
            <person name="Zhu C."/>
            <person name="Berger M.F."/>
            <person name="Camargo A.A."/>
            <person name="Kelley F."/>
            <person name="McCarron S."/>
            <person name="Jepson D."/>
            <person name="Richardson A."/>
            <person name="Raphael J."/>
            <person name="Moreira D."/>
            <person name="Taycher E."/>
            <person name="Zuo D."/>
            <person name="Mohr S."/>
            <person name="Kane M.F."/>
            <person name="Williamson J."/>
            <person name="Simpson A.J.G."/>
            <person name="Bulyk M.L."/>
            <person name="Harlow E."/>
            <person name="Marsischky G."/>
            <person name="Kolodner R.D."/>
            <person name="LaBaer J."/>
        </authorList>
    </citation>
    <scope>NUCLEOTIDE SEQUENCE [GENOMIC DNA]</scope>
    <source>
        <strain>ATCC 204508 / S288c</strain>
    </source>
</reference>
<reference key="5">
    <citation type="journal article" date="2003" name="Nature">
        <title>Global analysis of protein expression in yeast.</title>
        <authorList>
            <person name="Ghaemmaghami S."/>
            <person name="Huh W.-K."/>
            <person name="Bower K."/>
            <person name="Howson R.W."/>
            <person name="Belle A."/>
            <person name="Dephoure N."/>
            <person name="O'Shea E.K."/>
            <person name="Weissman J.S."/>
        </authorList>
    </citation>
    <scope>LEVEL OF PROTEIN EXPRESSION [LARGE SCALE ANALYSIS]</scope>
</reference>
<comment type="miscellaneous">
    <text evidence="2">Present with 2190 molecules/cell in log phase SD medium.</text>
</comment>
<accession>P35725</accession>
<accession>D6VXM4</accession>
<keyword id="KW-1185">Reference proteome</keyword>
<sequence length="167" mass="19004">MQGDIRRKKDLLPRYKTGSKYNSRRRGGYLTTPMKKIIVYIILLCGVYFVIKVAYSDLNKETEIKLESHSSDVSASASDHTNIAAGGAADATNNKQPQQAKVPKEKFNNEVAKQQEVKNLENDLKPQIDSEKQKQINKDKKEQKQQLQKEKQDLAKENLANNEILDN</sequence>